<sequence>MSWSPSLPTQTCGAWEMKERLGTGGFGNVIRWHNQATGEQIAIKQCRQELSPKNRNRWCLEIQIMRRLNHPNVVAARDVPEGMQNLAPNDLPLLAMEYCQGGDLRRYLNQFENCCGLREGAVLTLLSDIASALRYLHENRIIHRDLKPENIVLQQGEKRLIHKIIDLGYAKELDQGSLCTSFVGTLQYLAPELLEQQKYTVTVDYWSFGTLAFECITGFRPFLPNWQPVQWHSKVRQKSEVDIVVSEDLNGAVKFSSSLPFPNNLNSVLAERLEKWLQLMLMWHPRQRGTDPQYGPNGCFRALDDILNLKLVHVLNMVTGTVHTYPVTEDESLQSLKTRIQENTGILETDQELLQKAGLVLLPDKPATQCISDSKTNEGLTLDMDLVFLLDNSKINYETQITPRPPPESVSCILQEPKRNLSFFQLRKVWGQVWHSIQTLKEDCNRLQQGQRAAMMSLLRNNSCLSKMKNAMASTAQQLKAKLDFFKTSIQIDLEKYKEQTEFGITSDKLLLAWREMEQAVEQCGRENDVKHLVERMMALQTDIVDLQRSPMGRKQGGTLDDLEEQARELYRKLREKPRDQRTEGDSQEMVRLLLQAIQSFEKKVRVIYTQLSKTVVCKQKALELLPKVEEVVSLMNEDERTVVRLQEKRQKELWNLLKIACSKVRGPVSGSPDSMNVSRLSHPGQLMSQPSSACDSLPESDKKSEELVAEAHALCSRLESALQDTVKEQDRSFTTLDWSWLQMEDEERCSLEQACD</sequence>
<feature type="chain" id="PRO_0000086014" description="Inhibitor of nuclear factor kappa-B kinase subunit beta">
    <location>
        <begin position="1"/>
        <end position="757"/>
    </location>
</feature>
<feature type="domain" description="Protein kinase" evidence="3">
    <location>
        <begin position="15"/>
        <end position="300"/>
    </location>
</feature>
<feature type="region of interest" description="Leucine-zipper">
    <location>
        <begin position="458"/>
        <end position="479"/>
    </location>
</feature>
<feature type="region of interest" description="Disordered" evidence="5">
    <location>
        <begin position="683"/>
        <end position="703"/>
    </location>
</feature>
<feature type="region of interest" description="NEMO-binding" evidence="2">
    <location>
        <begin position="737"/>
        <end position="742"/>
    </location>
</feature>
<feature type="active site" description="Proton acceptor" evidence="3 4">
    <location>
        <position position="145"/>
    </location>
</feature>
<feature type="binding site" evidence="3">
    <location>
        <begin position="21"/>
        <end position="29"/>
    </location>
    <ligand>
        <name>ATP</name>
        <dbReference type="ChEBI" id="CHEBI:30616"/>
    </ligand>
</feature>
<feature type="binding site" evidence="3">
    <location>
        <position position="44"/>
    </location>
    <ligand>
        <name>ATP</name>
        <dbReference type="ChEBI" id="CHEBI:30616"/>
    </ligand>
</feature>
<feature type="modified residue" description="Phosphoserine; by TBK1 and PKC/PRKCZ" evidence="2">
    <location>
        <position position="177"/>
    </location>
</feature>
<feature type="modified residue" description="S-nitrosocysteine" evidence="2">
    <location>
        <position position="179"/>
    </location>
</feature>
<feature type="modified residue" description="Phosphoserine; by TBK1, PKC/PRKCZ and PDPK1" evidence="2">
    <location>
        <position position="181"/>
    </location>
</feature>
<feature type="modified residue" description="Hydroxyproline" evidence="1">
    <location>
        <position position="191"/>
    </location>
</feature>
<feature type="modified residue" description="Phosphoserine; by autocatalysis" evidence="2">
    <location>
        <position position="670"/>
    </location>
</feature>
<feature type="modified residue" description="Phosphoserine" evidence="17">
    <location>
        <position position="672"/>
    </location>
</feature>
<feature type="modified residue" description="Phosphoserine; by autocatalysis" evidence="2">
    <location>
        <position position="675"/>
    </location>
</feature>
<feature type="modified residue" description="Phosphoserine; by autocatalysis" evidence="2">
    <location>
        <position position="682"/>
    </location>
</feature>
<feature type="modified residue" description="Phosphoserine; by autocatalysis" evidence="2">
    <location>
        <position position="689"/>
    </location>
</feature>
<feature type="modified residue" description="Phosphoserine; by autocatalysis" evidence="2">
    <location>
        <position position="692"/>
    </location>
</feature>
<feature type="modified residue" description="Phosphoserine; by autocatalysis" evidence="2">
    <location>
        <position position="697"/>
    </location>
</feature>
<feature type="modified residue" description="Phosphoserine; by autocatalysis" evidence="2">
    <location>
        <position position="705"/>
    </location>
</feature>
<feature type="modified residue" description="Phosphoserine; by autocatalysis" evidence="2">
    <location>
        <position position="733"/>
    </location>
</feature>
<feature type="modified residue" description="Phosphoserine; by autocatalysis" evidence="2">
    <location>
        <position position="740"/>
    </location>
</feature>
<feature type="cross-link" description="Glycyl lysine isopeptide (Lys-Gly) (interchain with G-Cter in ubiquitin)" evidence="2">
    <location>
        <position position="163"/>
    </location>
</feature>
<feature type="sequence conflict" description="In Ref. 2; AAD52095." evidence="16" ref="2">
    <original>N</original>
    <variation>D</variation>
    <location>
        <position position="56"/>
    </location>
</feature>
<feature type="sequence conflict" description="In Ref. 2; AAD52095." evidence="16" ref="2">
    <original>N</original>
    <variation>D</variation>
    <location>
        <position position="343"/>
    </location>
</feature>
<feature type="sequence conflict" description="In Ref. 2; AAD52095." evidence="16" ref="2">
    <original>K</original>
    <variation>E</variation>
    <location>
        <position position="356"/>
    </location>
</feature>
<feature type="sequence conflict" description="In Ref. 2; AAD52095." evidence="16" ref="2">
    <original>L</original>
    <variation>F</variation>
    <location>
        <position position="390"/>
    </location>
</feature>
<feature type="sequence conflict" description="In Ref. 2; AAD52095." evidence="16" ref="2">
    <original>P</original>
    <variation>Q</variation>
    <location>
        <position position="406"/>
    </location>
</feature>
<feature type="sequence conflict" description="In Ref. 2; AAD52095." evidence="16" ref="2">
    <original>K</original>
    <variation>R</variation>
    <location>
        <position position="573"/>
    </location>
</feature>
<feature type="sequence conflict" description="In Ref. 2." evidence="16" ref="2">
    <original>TLDWSWLQMEDEERCSLEQACD</original>
    <variation>VTA</variation>
    <location>
        <begin position="736"/>
        <end position="757"/>
    </location>
</feature>
<protein>
    <recommendedName>
        <fullName>Inhibitor of nuclear factor kappa-B kinase subunit beta</fullName>
        <shortName>I-kappa-B-kinase beta</shortName>
        <shortName>IKK-B</shortName>
        <shortName>IKK-beta</shortName>
        <shortName>IkBKB</shortName>
        <ecNumber evidence="2">2.7.11.10</ecNumber>
    </recommendedName>
    <alternativeName>
        <fullName>I-kappa-B kinase 2</fullName>
        <shortName>IKK2</shortName>
    </alternativeName>
    <alternativeName>
        <fullName>Nuclear factor NF-kappa-B inhibitor kinase beta</fullName>
        <shortName>NFKBIKB</shortName>
    </alternativeName>
    <alternativeName>
        <fullName>Serine/threonine protein kinase IKBKB</fullName>
        <ecNumber evidence="13 14 15">2.7.11.1</ecNumber>
    </alternativeName>
</protein>
<proteinExistence type="evidence at protein level"/>
<reference key="1">
    <citation type="journal article" date="1998" name="Proc. Natl. Acad. Sci. U.S.A.">
        <title>Differential regulation of IkappaB kinase alpha and beta by two upstream kinases, NF-kappaB-inducing kinase and mitogen-activated protein kinase/ERK kinase kinase-1.</title>
        <authorList>
            <person name="Nakano H."/>
            <person name="Shindo M."/>
            <person name="Sakon S."/>
            <person name="Nishinaka S."/>
            <person name="Mihara M."/>
            <person name="Yagita H."/>
            <person name="Okumura K."/>
        </authorList>
    </citation>
    <scope>NUCLEOTIDE SEQUENCE [MRNA]</scope>
    <scope>PHOSPHORYLATION BY MEKK1</scope>
    <source>
        <strain>C57BL/6J</strain>
        <tissue>Spleen</tissue>
    </source>
</reference>
<reference key="2">
    <citation type="submission" date="1998-08" db="EMBL/GenBank/DDBJ databases">
        <title>Murine IkB kinase-B, a developmentally regulated protein kinase that constitutively phosphorylates serine residues of IkB.</title>
        <authorList>
            <person name="Hu M.C.-T."/>
            <person name="Wang Y.-P."/>
            <person name="Mikhail A."/>
            <person name="Qiu W.R."/>
        </authorList>
    </citation>
    <scope>NUCLEOTIDE SEQUENCE [MRNA]</scope>
</reference>
<reference key="3">
    <citation type="journal article" date="1999" name="Immunity">
        <title>Embryonic lethality, liver degeneration, and impaired NF-kappa B activation in IKK-beta-deficient mice.</title>
        <authorList>
            <person name="Tanaka M."/>
            <person name="Fuentes M.E."/>
            <person name="Yamaguchi K."/>
            <person name="Durnin M.H."/>
            <person name="Dalrymple S.A."/>
            <person name="Hardy K.L."/>
            <person name="Goeddel D.V."/>
        </authorList>
    </citation>
    <scope>DISRUPTION PHENOTYPE</scope>
</reference>
<reference key="4">
    <citation type="journal article" date="1999" name="Oncogene">
        <title>Hematopoietic progenitor kinase-1 (HPK1) stress response signaling pathway activates IkappaB kinases (IKK-alpha/beta) and IKK-beta is a developmentally regulated protein kinase.</title>
        <authorList>
            <person name="Hu M.C.-T."/>
            <person name="Wang Y.-P."/>
            <person name="Qiu W.R."/>
            <person name="Mikhail A."/>
            <person name="Meyer C.F."/>
            <person name="Tan T.-H."/>
        </authorList>
    </citation>
    <scope>DEVELOPMENTAL STAGE</scope>
</reference>
<reference key="5">
    <citation type="journal article" date="1998" name="Mol. Cell. Biol.">
        <title>Coordinate regulation of IkappaB kinases by mitogen-activated protein kinase kinase kinase 1 and NF-kappaB-inducing kinase.</title>
        <authorList>
            <person name="Nemoto S."/>
            <person name="DiDonato J.A."/>
            <person name="Lin A."/>
        </authorList>
    </citation>
    <scope>IKK PHOSPHORYLATION</scope>
</reference>
<reference key="6">
    <citation type="journal article" date="1999" name="Science">
        <title>Severe liver degeneration in mice lacking the IkappaB kinase 2 gene.</title>
        <authorList>
            <person name="Li Q."/>
            <person name="Van Antwerp D."/>
            <person name="Mercurio F."/>
            <person name="Lee K.F."/>
            <person name="Verma I.M."/>
        </authorList>
    </citation>
    <scope>DISRUPTION PHENOTYPE</scope>
</reference>
<reference key="7">
    <citation type="journal article" date="2000" name="Am. J. Physiol.">
        <title>The I kappa B/NF-kappa B system: a key determinant of mucosal inflammation and protection.</title>
        <authorList>
            <person name="Jobin C."/>
            <person name="Sartor R.B."/>
        </authorList>
    </citation>
    <scope>REVIEW</scope>
</reference>
<reference key="8">
    <citation type="journal article" date="2000" name="Mol. Cell. Biol.">
        <title>PKR stimulates NF-kappaB irrespective of its kinase function by interacting with the IkappaB kinase complex.</title>
        <authorList>
            <person name="Bonnet M.C."/>
            <person name="Weil R."/>
            <person name="Dam E."/>
            <person name="Hovanessian A.G."/>
            <person name="Meurs E.F."/>
        </authorList>
    </citation>
    <scope>INTERACTION WITH EIF2AK2</scope>
</reference>
<reference key="9">
    <citation type="journal article" date="2010" name="Cell">
        <title>A tissue-specific atlas of mouse protein phosphorylation and expression.</title>
        <authorList>
            <person name="Huttlin E.L."/>
            <person name="Jedrychowski M.P."/>
            <person name="Elias J.E."/>
            <person name="Goswami T."/>
            <person name="Rad R."/>
            <person name="Beausoleil S.A."/>
            <person name="Villen J."/>
            <person name="Haas W."/>
            <person name="Sowa M.E."/>
            <person name="Gygi S.P."/>
        </authorList>
    </citation>
    <scope>PHOSPHORYLATION [LARGE SCALE ANALYSIS] AT SER-672</scope>
    <scope>IDENTIFICATION BY MASS SPECTROMETRY [LARGE SCALE ANALYSIS]</scope>
    <source>
        <tissue>Brown adipose tissue</tissue>
        <tissue>Kidney</tissue>
        <tissue>Lung</tissue>
        <tissue>Pancreas</tissue>
        <tissue>Spleen</tissue>
        <tissue>Testis</tissue>
    </source>
</reference>
<reference key="10">
    <citation type="journal article" date="2010" name="Nat. Cell Biol.">
        <title>Telomere-independent Rap1 is an IKK adaptor and regulates NF-kappaB-dependent gene expression.</title>
        <authorList>
            <person name="Teo H."/>
            <person name="Ghosh S."/>
            <person name="Luesch H."/>
            <person name="Ghosh A."/>
            <person name="Wong E.T."/>
            <person name="Malik N."/>
            <person name="Orth A."/>
            <person name="de Jesus P."/>
            <person name="Perry A.S."/>
            <person name="Oliver J.D."/>
            <person name="Tran N.L."/>
            <person name="Speiser L.J."/>
            <person name="Wong M."/>
            <person name="Saez E."/>
            <person name="Schultz P."/>
            <person name="Chanda S.K."/>
            <person name="Verma I.M."/>
            <person name="Tergaonkar V."/>
        </authorList>
    </citation>
    <scope>INTERACTION WITH TERF2IP</scope>
</reference>
<reference key="11">
    <citation type="journal article" date="2011" name="Nat. Immunol.">
        <title>The IkappaB kinase complex regulates the stability of cytokine-encoding mRNA induced by TLR-IL-1R by controlling degradation of regnase-1.</title>
        <authorList>
            <person name="Iwasaki H."/>
            <person name="Takeuchi O."/>
            <person name="Teraguchi S."/>
            <person name="Matsushita K."/>
            <person name="Uehata T."/>
            <person name="Kuniyoshi K."/>
            <person name="Satoh T."/>
            <person name="Saitoh T."/>
            <person name="Matsushita M."/>
            <person name="Standley D.M."/>
            <person name="Akira S."/>
        </authorList>
    </citation>
    <scope>INTERACTION WITH ZC3H12A</scope>
</reference>
<reference key="12">
    <citation type="journal article" date="2013" name="Mol. Cell. Biol.">
        <title>A-kinase-anchoring protein-Lbc anchors IkappaB kinase beta to support interleukin-6-mediated cardiomyocyte hypertrophy.</title>
        <authorList>
            <person name="del Vescovo C.D."/>
            <person name="Cotecchia S."/>
            <person name="Diviani D."/>
        </authorList>
    </citation>
    <scope>INTERACTION WITH AKAP13</scope>
    <scope>IDENTIFICATION BY MASS SPECTROMETRY</scope>
    <scope>TISSUE SPECIFICITY</scope>
</reference>
<reference key="13">
    <citation type="journal article" date="2014" name="Proc. Natl. Acad. Sci. U.S.A.">
        <title>IKKbeta is an IRF5 kinase that instigates inflammation.</title>
        <authorList>
            <person name="Ren J."/>
            <person name="Chen X."/>
            <person name="Chen Z.J."/>
        </authorList>
    </citation>
    <scope>FUNCTION</scope>
    <scope>CATALYTIC ACTIVITY</scope>
</reference>
<reference key="14">
    <citation type="journal article" date="2019" name="Nat. Commun.">
        <title>Serine 25 phosphorylation inhibits RIPK1 kinase-dependent cell death in models of infection and inflammation.</title>
        <authorList>
            <person name="Dondelinger Y."/>
            <person name="Delanghe T."/>
            <person name="Priem D."/>
            <person name="Wynosky-Dolfi M.A."/>
            <person name="Sorobetea D."/>
            <person name="Rojas-Rivera D."/>
            <person name="Giansanti P."/>
            <person name="Roelandt R."/>
            <person name="Gropengiesser J."/>
            <person name="Ruckdeschel K."/>
            <person name="Savvides S.N."/>
            <person name="Heck A.J.R."/>
            <person name="Vandenabeele P."/>
            <person name="Brodsky I.E."/>
            <person name="Bertrand M.J.M."/>
        </authorList>
    </citation>
    <scope>FUNCTION</scope>
</reference>
<reference key="15">
    <citation type="journal article" date="2024" name="Proc. Natl. Acad. Sci. U.S.A.">
        <title>Threonine phosphorylation of STAT1 restricts interferon signaling and promotes innate inflammatory responses.</title>
        <authorList>
            <person name="Metwally H."/>
            <person name="Elbrashy M.M."/>
            <person name="Ozawa T."/>
            <person name="Okuyama K."/>
            <person name="White J.T."/>
            <person name="Tulyeu J."/>
            <person name="Soendergaard J.N."/>
            <person name="Wing J.B."/>
            <person name="Muratsu A."/>
            <person name="Matsumoto H."/>
            <person name="Ikawa M."/>
            <person name="Kishi H."/>
            <person name="Taniuchi I."/>
            <person name="Kishimoto T."/>
        </authorList>
    </citation>
    <scope>FUNCTION</scope>
    <scope>CATALYTIC ACTIVITY</scope>
</reference>
<comment type="function">
    <text evidence="2 13 14 15">Serine kinase that plays an essential role in the NF-kappa-B signaling pathway which is activated by multiple stimuli such as inflammatory cytokines, bacterial or viral products, DNA damages or other cellular stresses (By similarity). Acts as a part of the canonical IKK complex in the conventional pathway of NF-kappa-B activation (By similarity). Phosphorylates inhibitors of NF-kappa-B on 2 critical serine residues (By similarity). These modifications allow polyubiquitination of the inhibitors and subsequent degradation by the proteasome (By similarity). In turn, free NF-kappa-B is translocated into the nucleus and activates the transcription of hundreds of genes involved in immune response, growth control, or protection against apoptosis (By similarity). In addition to the NF-kappa-B inhibitors, phosphorylates several other components of the signaling pathway including NEMO/IKBKG, NF-kappa-B subunits RELA and NFKB1, as well as IKK-related kinases TBK1 and IKBKE (By similarity). IKK-related kinase phosphorylations may prevent the overproduction of inflammatory mediators since they exert a negative regulation on canonical IKKs (By similarity). Phosphorylates FOXO3, mediating the TNF-dependent inactivation of this pro-apoptotic transcription factor (By similarity). Also phosphorylates other substrates including NAA10, NCOA3, BCL10 and IRS1 (By similarity). Phosphorylates RIPK1 at 'Ser-25' which represses its kinase activity and consequently prevents TNF-mediated RIPK1-dependent cell death (PubMed:30988283). Phosphorylates the C-terminus of IRF5, stimulating IRF5 homodimerization and translocation into the nucleus (PubMed:25326420). Following bacterial lipopolysaccharide (LPS)-induced TLR4 endocytosis, phosphorylates STAT1 at 'Thr-748' which restricts interferon signaling and anti-inflammatory responses and promotes innate inflammatory responses (PubMed:38621137). IKBKB-mediated phosphorylation of STAT1 at 'Thr-748' promotes binding of STAT1 to the ARID5A promoter, resulting in transcriptional activation of ARID5A and subsequent ARID5A-mediated stabilization of IL6 (By similarity). It also promotes binding of STAT1 to the IL12B promoter and activation of IL12B transcription (By similarity).</text>
</comment>
<comment type="catalytic activity">
    <reaction evidence="2">
        <text>L-seryl-[I-kappa-B protein] + ATP = O-phospho-L-seryl-[I-kappa-B protein] + ADP + H(+)</text>
        <dbReference type="Rhea" id="RHEA:19073"/>
        <dbReference type="Rhea" id="RHEA-COMP:13698"/>
        <dbReference type="Rhea" id="RHEA-COMP:13699"/>
        <dbReference type="ChEBI" id="CHEBI:15378"/>
        <dbReference type="ChEBI" id="CHEBI:29999"/>
        <dbReference type="ChEBI" id="CHEBI:30616"/>
        <dbReference type="ChEBI" id="CHEBI:83421"/>
        <dbReference type="ChEBI" id="CHEBI:456216"/>
        <dbReference type="EC" id="2.7.11.10"/>
    </reaction>
</comment>
<comment type="catalytic activity">
    <reaction evidence="13 14">
        <text>L-seryl-[protein] + ATP = O-phospho-L-seryl-[protein] + ADP + H(+)</text>
        <dbReference type="Rhea" id="RHEA:17989"/>
        <dbReference type="Rhea" id="RHEA-COMP:9863"/>
        <dbReference type="Rhea" id="RHEA-COMP:11604"/>
        <dbReference type="ChEBI" id="CHEBI:15378"/>
        <dbReference type="ChEBI" id="CHEBI:29999"/>
        <dbReference type="ChEBI" id="CHEBI:30616"/>
        <dbReference type="ChEBI" id="CHEBI:83421"/>
        <dbReference type="ChEBI" id="CHEBI:456216"/>
        <dbReference type="EC" id="2.7.11.1"/>
    </reaction>
</comment>
<comment type="catalytic activity">
    <reaction evidence="15">
        <text>L-threonyl-[protein] + ATP = O-phospho-L-threonyl-[protein] + ADP + H(+)</text>
        <dbReference type="Rhea" id="RHEA:46608"/>
        <dbReference type="Rhea" id="RHEA-COMP:11060"/>
        <dbReference type="Rhea" id="RHEA-COMP:11605"/>
        <dbReference type="ChEBI" id="CHEBI:15378"/>
        <dbReference type="ChEBI" id="CHEBI:30013"/>
        <dbReference type="ChEBI" id="CHEBI:30616"/>
        <dbReference type="ChEBI" id="CHEBI:61977"/>
        <dbReference type="ChEBI" id="CHEBI:456216"/>
        <dbReference type="EC" id="2.7.11.1"/>
    </reaction>
</comment>
<comment type="subunit">
    <text evidence="2 9 10 11">Component of the I-kappa-B-kinase (IKK) core complex consisting of CHUK, IKBKB and IKBKG; probably four alpha/CHUK-beta/IKBKB dimers are associated with four gamma/IKBKG subunits. The IKK core complex seems to associate with regulatory or adapter proteins to form a IKK-signalosome holo-complex (By similarity). The IKK complex associates with TERF2IP/RAP1, leading to promote IKK-mediated phosphorylation of RELA/p65 (PubMed:20622870). Part of a complex composed of NCOA2, NCOA3, CHUK/IKKA, IKBKB, IKBKG and CREBBP. Part of a 70-90 kDa complex at least consisting of CHUK/IKKA, IKBKB, NFKBIA, RELA, ELP1 and MAP3K14. Found in a membrane raft complex, at least composed of BCL10, CARD11, DPP4 and IKBKB. Interacts with SQSTM1 through PRKCZ or PRKCI. Forms an NGF-induced complex with IKBKB, PRKCI and TRAF6. May interact with MAVS/IPS1. Interacts with NALP2. Interacts with TICAM1. Interacts with FAF1; the interaction disrupts the IKK complex formation. Interacts with ATM. Part of a ternary complex consisting of TANK, IKBKB and IKBKG. Interacts with NIBP; the interaction is direct. Interacts with ARRB1 and ARRB2. Interacts with TRIM21. Interacts with NLRC5; prevents IKBKB phosphorylation and kinase activity. Interacts with PDPK1 (By similarity). Interacts with EIF2AK2/PKR (PubMed:10848580). The phosphorylated form interacts with PPM1A and PPM1B. Interacts with ZNF268 isoform 2; the interaction is further increased in a TNF-alpha-dependent manner. Interacts with IKBKE. Interacts with ZC3H12A (PubMed:22037600). Interacts with AKAP13 (PubMed:23090968). Interacts with LRRC14; disrupts IKBKB-IKBKG interaction preventing I-kappa-B-kinase (IKK) core complex formation and leading to a decrease of IKBKB phosphorylation and NF-kappaB activation (By similarity). Interacts with SASH1 (By similarity). Interacts with ARFIP2 (By similarity). Interacts with FKBP5 (By similarity). Interacts with kinase TBK1; the complex interacts with STAT1, leading to phosphorylation of STAT1 on 'Thr-748' by IKBKB.</text>
</comment>
<comment type="interaction">
    <interactant intactId="EBI-447960">
        <id>O88351</id>
    </interactant>
    <interactant intactId="EBI-646245">
        <id>Q60680</id>
        <label>Chuk</label>
    </interactant>
    <organismsDiffer>false</organismsDiffer>
    <experiments>4</experiments>
</comment>
<comment type="interaction">
    <interactant intactId="EBI-447960">
        <id>O88351</id>
    </interactant>
    <interactant intactId="EBI-998011">
        <id>O88522</id>
        <label>Ikbkg</label>
    </interactant>
    <organismsDiffer>false</organismsDiffer>
    <experiments>8</experiments>
</comment>
<comment type="interaction">
    <interactant intactId="EBI-447960">
        <id>O88351</id>
    </interactant>
    <interactant intactId="EBI-296749">
        <id>P68040</id>
        <label>Rack1</label>
    </interactant>
    <organismsDiffer>false</organismsDiffer>
    <experiments>4</experiments>
</comment>
<comment type="interaction">
    <interactant intactId="EBI-447960">
        <id>O88351</id>
    </interactant>
    <interactant intactId="EBI-751001">
        <id>Q14145</id>
        <label>KEAP1</label>
    </interactant>
    <organismsDiffer>true</organismsDiffer>
    <experiments>2</experiments>
</comment>
<comment type="interaction">
    <interactant intactId="EBI-447960">
        <id>O88351</id>
    </interactant>
    <interactant intactId="EBI-359977">
        <id>P01375</id>
        <label>TNF</label>
    </interactant>
    <organismsDiffer>true</organismsDiffer>
    <experiments>3</experiments>
</comment>
<comment type="subcellular location">
    <subcellularLocation>
        <location evidence="2">Cytoplasm</location>
    </subcellularLocation>
    <subcellularLocation>
        <location evidence="2">Nucleus</location>
    </subcellularLocation>
    <subcellularLocation>
        <location evidence="2">Membrane raft</location>
    </subcellularLocation>
    <text evidence="2">Colocalized with DPP4 in membrane rafts.</text>
</comment>
<comment type="tissue specificity">
    <text evidence="12">Detected in heart (at protein level) (PubMed:23090968). Expressed in liver, kidney and spleen.</text>
</comment>
<comment type="developmental stage">
    <text evidence="8">While it is expressed ubiquitously throughout the mouse embryo, at 9.5 dpc its expression begins to be localized to the brain, neural ganglia, neural tube, and in liver at 12.5 dpc. At 15.5 dpc, the expression is further restricted to specific tissues of the embryo.</text>
</comment>
<comment type="domain">
    <text evidence="2">The kinase domain is located in the N-terminal region. The leucine zipper is important to allow homo- and hetero-dimerization. At the C-terminal region is located the region responsible for the interaction with NEMO/IKBKG.</text>
</comment>
<comment type="PTM">
    <text evidence="2">Upon cytokine stimulation, phosphorylated on Ser-177 and Ser-181 by MEKK1 and/or MAP3K14/NIK as well as TBK1 and PRKCZ; which enhances activity. Phosphorylated by MAP3K7/TAK1 in response to NOD1 and NOD2 signaling, promoting activation and phosphorylation of NF-kappa-B inhibitors, leading to NF-kappa-B activation. Once activated, autophosphorylates on the C-terminal serine cluster; which decreases activity and prevents prolonged activation of the inflammatory response. Phosphorylated by the IKK-related kinases TBK1 and IKBKE, which is associated with reduced CHUK/IKKA and IKBKB activity and NF-kappa-B-dependent gene transcription. Dephosphorylated at Ser-177 and Ser-181 by PPM1A and PPM1B.</text>
</comment>
<comment type="PTM">
    <text evidence="2">Ubiquitinated. Monoubiquitination involves TRIM21 that leads to inhibition of Tax-induced NF-kappa-B signaling. 'Ser-163' may not serve as a monoubiquitination site. Ubiquitination on 'Ser-163' may modulate phosphorylation on C-terminal serine residues.</text>
</comment>
<comment type="PTM">
    <text evidence="2">Hydroxylated by PHD1/EGLN2, loss of hydroxylation under hypoxic conditions results in activation of NF-kappa-B.</text>
</comment>
<comment type="disruption phenotype">
    <text evidence="6 7">Mice present extensive liver damage from apoptosis and die as embryos. They show a marked reduction in TNF-alpha and IL1-alpha-induced NF-kappa-B activity.</text>
</comment>
<comment type="similarity">
    <text evidence="3">Belongs to the protein kinase superfamily. Ser/Thr protein kinase family. I-kappa-B kinase subfamily.</text>
</comment>
<accession>O88351</accession>
<accession>Q9R1J6</accession>
<keyword id="KW-0067">ATP-binding</keyword>
<keyword id="KW-0963">Cytoplasm</keyword>
<keyword id="KW-0379">Hydroxylation</keyword>
<keyword id="KW-1017">Isopeptide bond</keyword>
<keyword id="KW-0418">Kinase</keyword>
<keyword id="KW-0472">Membrane</keyword>
<keyword id="KW-0547">Nucleotide-binding</keyword>
<keyword id="KW-0539">Nucleus</keyword>
<keyword id="KW-0597">Phosphoprotein</keyword>
<keyword id="KW-1185">Reference proteome</keyword>
<keyword id="KW-0702">S-nitrosylation</keyword>
<keyword id="KW-0723">Serine/threonine-protein kinase</keyword>
<keyword id="KW-0808">Transferase</keyword>
<keyword id="KW-0832">Ubl conjugation</keyword>
<dbReference type="EC" id="2.7.11.10" evidence="2"/>
<dbReference type="EC" id="2.7.11.1" evidence="13 14 15"/>
<dbReference type="EMBL" id="AF026524">
    <property type="protein sequence ID" value="AAC23557.1"/>
    <property type="molecule type" value="mRNA"/>
</dbReference>
<dbReference type="EMBL" id="AF088910">
    <property type="protein sequence ID" value="AAD52095.1"/>
    <property type="molecule type" value="mRNA"/>
</dbReference>
<dbReference type="CCDS" id="CCDS52522.1"/>
<dbReference type="RefSeq" id="NP_034676.1">
    <property type="nucleotide sequence ID" value="NM_010546.2"/>
</dbReference>
<dbReference type="SMR" id="O88351"/>
<dbReference type="BioGRID" id="200601">
    <property type="interactions" value="35"/>
</dbReference>
<dbReference type="ComplexPortal" id="CPX-3270">
    <property type="entry name" value="IkappaB kinase complex"/>
</dbReference>
<dbReference type="CORUM" id="O88351"/>
<dbReference type="DIP" id="DIP-29813N"/>
<dbReference type="FunCoup" id="O88351">
    <property type="interactions" value="2471"/>
</dbReference>
<dbReference type="IntAct" id="O88351">
    <property type="interactions" value="27"/>
</dbReference>
<dbReference type="MINT" id="O88351"/>
<dbReference type="STRING" id="10090.ENSMUSP00000033939"/>
<dbReference type="BindingDB" id="O88351"/>
<dbReference type="ChEMBL" id="CHEMBL6012"/>
<dbReference type="GlyGen" id="O88351">
    <property type="glycosylation" value="2 sites, 1 O-linked glycan (2 sites)"/>
</dbReference>
<dbReference type="iPTMnet" id="O88351"/>
<dbReference type="PhosphoSitePlus" id="O88351"/>
<dbReference type="SwissPalm" id="O88351"/>
<dbReference type="jPOST" id="O88351"/>
<dbReference type="PaxDb" id="10090-ENSMUSP00000033939"/>
<dbReference type="PeptideAtlas" id="O88351"/>
<dbReference type="ProteomicsDB" id="266962"/>
<dbReference type="Pumba" id="O88351"/>
<dbReference type="DNASU" id="16150"/>
<dbReference type="GeneID" id="16150"/>
<dbReference type="KEGG" id="mmu:16150"/>
<dbReference type="AGR" id="MGI:1338071"/>
<dbReference type="CTD" id="3551"/>
<dbReference type="MGI" id="MGI:1338071">
    <property type="gene designation" value="Ikbkb"/>
</dbReference>
<dbReference type="eggNOG" id="KOG4250">
    <property type="taxonomic scope" value="Eukaryota"/>
</dbReference>
<dbReference type="InParanoid" id="O88351"/>
<dbReference type="OrthoDB" id="267381at2759"/>
<dbReference type="PhylomeDB" id="O88351"/>
<dbReference type="BRENDA" id="2.7.11.10">
    <property type="organism ID" value="3474"/>
</dbReference>
<dbReference type="Reactome" id="R-MMU-1169091">
    <property type="pathway name" value="Activation of NF-kappaB in B cells"/>
</dbReference>
<dbReference type="Reactome" id="R-MMU-1810476">
    <property type="pathway name" value="RIP-mediated NFkB activation via ZBP1"/>
</dbReference>
<dbReference type="Reactome" id="R-MMU-202424">
    <property type="pathway name" value="Downstream TCR signaling"/>
</dbReference>
<dbReference type="Reactome" id="R-MMU-209543">
    <property type="pathway name" value="p75NTR recruits signalling complexes"/>
</dbReference>
<dbReference type="Reactome" id="R-MMU-209560">
    <property type="pathway name" value="NF-kB is activated and signals survival"/>
</dbReference>
<dbReference type="Reactome" id="R-MMU-2871837">
    <property type="pathway name" value="FCERI mediated NF-kB activation"/>
</dbReference>
<dbReference type="Reactome" id="R-MMU-445989">
    <property type="pathway name" value="TAK1-dependent IKK and NF-kappa-B activation"/>
</dbReference>
<dbReference type="Reactome" id="R-MMU-5357905">
    <property type="pathway name" value="Regulation of TNFR1 signaling"/>
</dbReference>
<dbReference type="Reactome" id="R-MMU-5357956">
    <property type="pathway name" value="TNFR1-induced NF-kappa-B signaling pathway"/>
</dbReference>
<dbReference type="Reactome" id="R-MMU-5607764">
    <property type="pathway name" value="CLEC7A (Dectin-1) signaling"/>
</dbReference>
<dbReference type="Reactome" id="R-MMU-5684264">
    <property type="pathway name" value="MAP3K8 (TPL2)-dependent MAPK1/3 activation"/>
</dbReference>
<dbReference type="Reactome" id="R-MMU-9020702">
    <property type="pathway name" value="Interleukin-1 signaling"/>
</dbReference>
<dbReference type="Reactome" id="R-MMU-933542">
    <property type="pathway name" value="TRAF6 mediated NF-kB activation"/>
</dbReference>
<dbReference type="Reactome" id="R-MMU-937039">
    <property type="pathway name" value="IRAK1 recruits IKK complex"/>
</dbReference>
<dbReference type="Reactome" id="R-MMU-937041">
    <property type="pathway name" value="IKK complex recruitment mediated by RIP1"/>
</dbReference>
<dbReference type="Reactome" id="R-MMU-975144">
    <property type="pathway name" value="IRAK1 recruits IKK complex upon TLR7/8 or 9 stimulation"/>
</dbReference>
<dbReference type="Reactome" id="R-MMU-9758274">
    <property type="pathway name" value="Regulation of NF-kappa B signaling"/>
</dbReference>
<dbReference type="Reactome" id="R-MMU-9833482">
    <property type="pathway name" value="PKR-mediated signaling"/>
</dbReference>
<dbReference type="Reactome" id="R-MMU-9860276">
    <property type="pathway name" value="SLC15A4:TASL-dependent IRF5 activation"/>
</dbReference>
<dbReference type="Reactome" id="R-MMU-9860927">
    <property type="pathway name" value="Turbulent (oscillatory, disturbed) flow shear stress activates signaling by PIEZO1 and integrins in endothelial cells"/>
</dbReference>
<dbReference type="Reactome" id="R-MMU-9909505">
    <property type="pathway name" value="Modulation of host responses by IFN-stimulated genes"/>
</dbReference>
<dbReference type="BioGRID-ORCS" id="16150">
    <property type="hits" value="19 hits in 83 CRISPR screens"/>
</dbReference>
<dbReference type="ChiTaRS" id="Ikbkb">
    <property type="organism name" value="mouse"/>
</dbReference>
<dbReference type="PRO" id="PR:O88351"/>
<dbReference type="Proteomes" id="UP000000589">
    <property type="component" value="Unplaced"/>
</dbReference>
<dbReference type="RNAct" id="O88351">
    <property type="molecule type" value="protein"/>
</dbReference>
<dbReference type="GO" id="GO:0035631">
    <property type="term" value="C:CD40 receptor complex"/>
    <property type="evidence" value="ECO:0000314"/>
    <property type="project" value="BHF-UCL"/>
</dbReference>
<dbReference type="GO" id="GO:0005737">
    <property type="term" value="C:cytoplasm"/>
    <property type="evidence" value="ECO:0000304"/>
    <property type="project" value="MGI"/>
</dbReference>
<dbReference type="GO" id="GO:0009898">
    <property type="term" value="C:cytoplasmic side of plasma membrane"/>
    <property type="evidence" value="ECO:0000314"/>
    <property type="project" value="BHF-UCL"/>
</dbReference>
<dbReference type="GO" id="GO:0008385">
    <property type="term" value="C:IkappaB kinase complex"/>
    <property type="evidence" value="ECO:0000314"/>
    <property type="project" value="MGI"/>
</dbReference>
<dbReference type="GO" id="GO:0045121">
    <property type="term" value="C:membrane raft"/>
    <property type="evidence" value="ECO:0007669"/>
    <property type="project" value="UniProtKB-SubCell"/>
</dbReference>
<dbReference type="GO" id="GO:0005634">
    <property type="term" value="C:nucleus"/>
    <property type="evidence" value="ECO:0007669"/>
    <property type="project" value="UniProtKB-SubCell"/>
</dbReference>
<dbReference type="GO" id="GO:0005524">
    <property type="term" value="F:ATP binding"/>
    <property type="evidence" value="ECO:0007669"/>
    <property type="project" value="UniProtKB-KW"/>
</dbReference>
<dbReference type="GO" id="GO:0008384">
    <property type="term" value="F:IkappaB kinase activity"/>
    <property type="evidence" value="ECO:0000314"/>
    <property type="project" value="MGI"/>
</dbReference>
<dbReference type="GO" id="GO:0046982">
    <property type="term" value="F:protein heterodimerization activity"/>
    <property type="evidence" value="ECO:0000250"/>
    <property type="project" value="UniProtKB"/>
</dbReference>
<dbReference type="GO" id="GO:0042803">
    <property type="term" value="F:protein homodimerization activity"/>
    <property type="evidence" value="ECO:0000250"/>
    <property type="project" value="UniProtKB"/>
</dbReference>
<dbReference type="GO" id="GO:0004672">
    <property type="term" value="F:protein kinase activity"/>
    <property type="evidence" value="ECO:0000314"/>
    <property type="project" value="MGI"/>
</dbReference>
<dbReference type="GO" id="GO:0019903">
    <property type="term" value="F:protein phosphatase binding"/>
    <property type="evidence" value="ECO:0000353"/>
    <property type="project" value="ARUK-UCL"/>
</dbReference>
<dbReference type="GO" id="GO:0106310">
    <property type="term" value="F:protein serine kinase activity"/>
    <property type="evidence" value="ECO:0007669"/>
    <property type="project" value="RHEA"/>
</dbReference>
<dbReference type="GO" id="GO:0004674">
    <property type="term" value="F:protein serine/threonine kinase activity"/>
    <property type="evidence" value="ECO:0000314"/>
    <property type="project" value="UniProtKB"/>
</dbReference>
<dbReference type="GO" id="GO:0097110">
    <property type="term" value="F:scaffold protein binding"/>
    <property type="evidence" value="ECO:0000266"/>
    <property type="project" value="MGI"/>
</dbReference>
<dbReference type="GO" id="GO:0001782">
    <property type="term" value="P:B cell homeostasis"/>
    <property type="evidence" value="ECO:0000315"/>
    <property type="project" value="MGI"/>
</dbReference>
<dbReference type="GO" id="GO:0007249">
    <property type="term" value="P:canonical NF-kappaB signal transduction"/>
    <property type="evidence" value="ECO:0000314"/>
    <property type="project" value="ComplexPortal"/>
</dbReference>
<dbReference type="GO" id="GO:0071356">
    <property type="term" value="P:cellular response to tumor necrosis factor"/>
    <property type="evidence" value="ECO:0000250"/>
    <property type="project" value="UniProtKB"/>
</dbReference>
<dbReference type="GO" id="GO:0007229">
    <property type="term" value="P:integrin-mediated signaling pathway"/>
    <property type="evidence" value="ECO:0000314"/>
    <property type="project" value="UniProt"/>
</dbReference>
<dbReference type="GO" id="GO:0018105">
    <property type="term" value="P:peptidyl-serine phosphorylation"/>
    <property type="evidence" value="ECO:0000314"/>
    <property type="project" value="UniProtKB"/>
</dbReference>
<dbReference type="GO" id="GO:0010765">
    <property type="term" value="P:positive regulation of sodium ion transport"/>
    <property type="evidence" value="ECO:0000316"/>
    <property type="project" value="MGI"/>
</dbReference>
<dbReference type="GO" id="GO:0045944">
    <property type="term" value="P:positive regulation of transcription by RNA polymerase II"/>
    <property type="evidence" value="ECO:0000250"/>
    <property type="project" value="UniProtKB"/>
</dbReference>
<dbReference type="GO" id="GO:0033209">
    <property type="term" value="P:tumor necrosis factor-mediated signaling pathway"/>
    <property type="evidence" value="ECO:0000315"/>
    <property type="project" value="UniProtKB"/>
</dbReference>
<dbReference type="CDD" id="cd14038">
    <property type="entry name" value="STKc_IKK_beta"/>
    <property type="match status" value="1"/>
</dbReference>
<dbReference type="CDD" id="cd17046">
    <property type="entry name" value="Ubl_IKKA_like"/>
    <property type="match status" value="1"/>
</dbReference>
<dbReference type="FunFam" id="3.10.20.90:FF:000087">
    <property type="entry name" value="Inhibitor of nuclear factor kappa B kinase subunit beta"/>
    <property type="match status" value="1"/>
</dbReference>
<dbReference type="FunFam" id="1.10.510.10:FF:000147">
    <property type="entry name" value="Inhibitor of nuclear factor kappa-B kinase subunit beta"/>
    <property type="match status" value="1"/>
</dbReference>
<dbReference type="FunFam" id="1.20.1270.250:FF:000002">
    <property type="entry name" value="Putative inhibitor of nuclear factor kappa-B kinase subunit beta"/>
    <property type="match status" value="1"/>
</dbReference>
<dbReference type="Gene3D" id="1.20.1270.250">
    <property type="match status" value="1"/>
</dbReference>
<dbReference type="Gene3D" id="6.10.250.2110">
    <property type="match status" value="1"/>
</dbReference>
<dbReference type="Gene3D" id="3.10.20.90">
    <property type="entry name" value="Phosphatidylinositol 3-kinase Catalytic Subunit, Chain A, domain 1"/>
    <property type="match status" value="1"/>
</dbReference>
<dbReference type="Gene3D" id="1.10.510.10">
    <property type="entry name" value="Transferase(Phosphotransferase) domain 1"/>
    <property type="match status" value="1"/>
</dbReference>
<dbReference type="InterPro" id="IPR041185">
    <property type="entry name" value="IKBKB_SDD"/>
</dbReference>
<dbReference type="InterPro" id="IPR046375">
    <property type="entry name" value="IKBKB_SDD_sf"/>
</dbReference>
<dbReference type="InterPro" id="IPR051180">
    <property type="entry name" value="IKK"/>
</dbReference>
<dbReference type="InterPro" id="IPR022007">
    <property type="entry name" value="IKKbetaNEMObind"/>
</dbReference>
<dbReference type="InterPro" id="IPR011009">
    <property type="entry name" value="Kinase-like_dom_sf"/>
</dbReference>
<dbReference type="InterPro" id="IPR000719">
    <property type="entry name" value="Prot_kinase_dom"/>
</dbReference>
<dbReference type="InterPro" id="IPR008271">
    <property type="entry name" value="Ser/Thr_kinase_AS"/>
</dbReference>
<dbReference type="PANTHER" id="PTHR22969">
    <property type="entry name" value="IKB KINASE"/>
    <property type="match status" value="1"/>
</dbReference>
<dbReference type="PANTHER" id="PTHR22969:SF7">
    <property type="entry name" value="INHIBITOR OF NUCLEAR FACTOR KAPPA-B KINASE SUBUNIT BETA"/>
    <property type="match status" value="1"/>
</dbReference>
<dbReference type="Pfam" id="PF18397">
    <property type="entry name" value="IKBKB_SDD"/>
    <property type="match status" value="1"/>
</dbReference>
<dbReference type="Pfam" id="PF12179">
    <property type="entry name" value="IKKbetaNEMObind"/>
    <property type="match status" value="1"/>
</dbReference>
<dbReference type="Pfam" id="PF00069">
    <property type="entry name" value="Pkinase"/>
    <property type="match status" value="1"/>
</dbReference>
<dbReference type="SMART" id="SM01239">
    <property type="entry name" value="IKKbetaNEMObind"/>
    <property type="match status" value="1"/>
</dbReference>
<dbReference type="SMART" id="SM00220">
    <property type="entry name" value="S_TKc"/>
    <property type="match status" value="1"/>
</dbReference>
<dbReference type="SUPFAM" id="SSF56112">
    <property type="entry name" value="Protein kinase-like (PK-like)"/>
    <property type="match status" value="1"/>
</dbReference>
<dbReference type="PROSITE" id="PS50011">
    <property type="entry name" value="PROTEIN_KINASE_DOM"/>
    <property type="match status" value="1"/>
</dbReference>
<dbReference type="PROSITE" id="PS00108">
    <property type="entry name" value="PROTEIN_KINASE_ST"/>
    <property type="match status" value="1"/>
</dbReference>
<gene>
    <name type="primary">Ikbkb</name>
    <name type="synonym">Ikkb</name>
</gene>
<evidence type="ECO:0000250" key="1"/>
<evidence type="ECO:0000250" key="2">
    <source>
        <dbReference type="UniProtKB" id="O14920"/>
    </source>
</evidence>
<evidence type="ECO:0000255" key="3">
    <source>
        <dbReference type="PROSITE-ProRule" id="PRU00159"/>
    </source>
</evidence>
<evidence type="ECO:0000255" key="4">
    <source>
        <dbReference type="PROSITE-ProRule" id="PRU10027"/>
    </source>
</evidence>
<evidence type="ECO:0000256" key="5">
    <source>
        <dbReference type="SAM" id="MobiDB-lite"/>
    </source>
</evidence>
<evidence type="ECO:0000269" key="6">
    <source>
    </source>
</evidence>
<evidence type="ECO:0000269" key="7">
    <source>
    </source>
</evidence>
<evidence type="ECO:0000269" key="8">
    <source>
    </source>
</evidence>
<evidence type="ECO:0000269" key="9">
    <source>
    </source>
</evidence>
<evidence type="ECO:0000269" key="10">
    <source>
    </source>
</evidence>
<evidence type="ECO:0000269" key="11">
    <source>
    </source>
</evidence>
<evidence type="ECO:0000269" key="12">
    <source>
    </source>
</evidence>
<evidence type="ECO:0000269" key="13">
    <source>
    </source>
</evidence>
<evidence type="ECO:0000269" key="14">
    <source>
    </source>
</evidence>
<evidence type="ECO:0000269" key="15">
    <source>
    </source>
</evidence>
<evidence type="ECO:0000305" key="16"/>
<evidence type="ECO:0007744" key="17">
    <source>
    </source>
</evidence>
<name>IKKB_MOUSE</name>
<organism>
    <name type="scientific">Mus musculus</name>
    <name type="common">Mouse</name>
    <dbReference type="NCBI Taxonomy" id="10090"/>
    <lineage>
        <taxon>Eukaryota</taxon>
        <taxon>Metazoa</taxon>
        <taxon>Chordata</taxon>
        <taxon>Craniata</taxon>
        <taxon>Vertebrata</taxon>
        <taxon>Euteleostomi</taxon>
        <taxon>Mammalia</taxon>
        <taxon>Eutheria</taxon>
        <taxon>Euarchontoglires</taxon>
        <taxon>Glires</taxon>
        <taxon>Rodentia</taxon>
        <taxon>Myomorpha</taxon>
        <taxon>Muroidea</taxon>
        <taxon>Muridae</taxon>
        <taxon>Murinae</taxon>
        <taxon>Mus</taxon>
        <taxon>Mus</taxon>
    </lineage>
</organism>